<organism>
    <name type="scientific">Homo sapiens</name>
    <name type="common">Human</name>
    <dbReference type="NCBI Taxonomy" id="9606"/>
    <lineage>
        <taxon>Eukaryota</taxon>
        <taxon>Metazoa</taxon>
        <taxon>Chordata</taxon>
        <taxon>Craniata</taxon>
        <taxon>Vertebrata</taxon>
        <taxon>Euteleostomi</taxon>
        <taxon>Mammalia</taxon>
        <taxon>Eutheria</taxon>
        <taxon>Euarchontoglires</taxon>
        <taxon>Primates</taxon>
        <taxon>Haplorrhini</taxon>
        <taxon>Catarrhini</taxon>
        <taxon>Hominidae</taxon>
        <taxon>Homo</taxon>
    </lineage>
</organism>
<name>FRG2_HUMAN</name>
<feature type="chain" id="PRO_0000300690" description="Protein FRG2">
    <location>
        <begin position="1"/>
        <end position="278"/>
    </location>
</feature>
<feature type="region of interest" description="Disordered" evidence="1">
    <location>
        <begin position="1"/>
        <end position="129"/>
    </location>
</feature>
<feature type="region of interest" description="Disordered" evidence="1">
    <location>
        <begin position="251"/>
        <end position="278"/>
    </location>
</feature>
<feature type="compositionally biased region" description="Basic and acidic residues" evidence="1">
    <location>
        <begin position="1"/>
        <end position="10"/>
    </location>
</feature>
<feature type="compositionally biased region" description="Polar residues" evidence="1">
    <location>
        <begin position="11"/>
        <end position="31"/>
    </location>
</feature>
<feature type="compositionally biased region" description="Basic and acidic residues" evidence="1">
    <location>
        <begin position="32"/>
        <end position="56"/>
    </location>
</feature>
<feature type="compositionally biased region" description="Polar residues" evidence="1">
    <location>
        <begin position="78"/>
        <end position="92"/>
    </location>
</feature>
<feature type="compositionally biased region" description="Polar residues" evidence="1">
    <location>
        <begin position="120"/>
        <end position="129"/>
    </location>
</feature>
<feature type="splice variant" id="VSP_055076" description="In isoform 2." evidence="3">
    <original>Q</original>
    <variation>QA</variation>
    <location>
        <position position="59"/>
    </location>
</feature>
<feature type="sequence conflict" description="In Ref. 2; AAI44573." evidence="4" ref="2">
    <original>S</original>
    <variation>P</variation>
    <location>
        <position position="8"/>
    </location>
</feature>
<sequence>MGKGNEDSDLHCSSIQCSTDQPPFQQISFTEKGSDEKKPFKEKGKTAFSHSSEKHIQRQGSEPNPNKENSEETKLKAGNSTAGSEPESSSYRENCRKRKMSSKDSCQDTAGNCPEKECSLSLNKKSRSSTAVHNSEIQETCDAHHRGHSRACTGHSKRHRSRALGVQTPSIRKSLVTSVRAMSEAVYQDLAQVWAQQIHSPLTCEQLTLLTRLRGPLCAQVQTLYSMATQAAYVFPAESWLVPATLPGPGESALDREAHPFPGQEITETVSGSDEAKL</sequence>
<proteinExistence type="evidence at transcript level"/>
<accession>Q64ET8</accession>
<accession>B7ZMJ1</accession>
<accession>E7EN36</accession>
<gene>
    <name type="primary">FRG2</name>
    <name type="synonym">FRG2A</name>
</gene>
<keyword id="KW-0025">Alternative splicing</keyword>
<keyword id="KW-0539">Nucleus</keyword>
<keyword id="KW-1185">Reference proteome</keyword>
<evidence type="ECO:0000256" key="1">
    <source>
        <dbReference type="SAM" id="MobiDB-lite"/>
    </source>
</evidence>
<evidence type="ECO:0000269" key="2">
    <source>
    </source>
</evidence>
<evidence type="ECO:0000303" key="3">
    <source>
    </source>
</evidence>
<evidence type="ECO:0000305" key="4"/>
<dbReference type="EMBL" id="AY714545">
    <property type="protein sequence ID" value="AAU14220.1"/>
    <property type="molecule type" value="mRNA"/>
</dbReference>
<dbReference type="EMBL" id="AF146191">
    <property type="status" value="NOT_ANNOTATED_CDS"/>
    <property type="molecule type" value="Genomic_DNA"/>
</dbReference>
<dbReference type="EMBL" id="BC144572">
    <property type="protein sequence ID" value="AAI44573.1"/>
    <property type="molecule type" value="mRNA"/>
</dbReference>
<dbReference type="CCDS" id="CCDS34123.1">
    <molecule id="Q64ET8-1"/>
</dbReference>
<dbReference type="CCDS" id="CCDS68834.1">
    <molecule id="Q64ET8-2"/>
</dbReference>
<dbReference type="RefSeq" id="NP_001005217.1">
    <molecule id="Q64ET8-1"/>
    <property type="nucleotide sequence ID" value="NM_001005217.4"/>
</dbReference>
<dbReference type="RefSeq" id="NP_001273749.1">
    <molecule id="Q64ET8-2"/>
    <property type="nucleotide sequence ID" value="NM_001286820.2"/>
</dbReference>
<dbReference type="BioGRID" id="138664">
    <property type="interactions" value="1"/>
</dbReference>
<dbReference type="IntAct" id="Q64ET8">
    <property type="interactions" value="1"/>
</dbReference>
<dbReference type="STRING" id="9606.ENSP00000424015"/>
<dbReference type="iPTMnet" id="Q64ET8"/>
<dbReference type="PhosphoSitePlus" id="Q64ET8"/>
<dbReference type="BioMuta" id="FRG2"/>
<dbReference type="DMDM" id="74708395"/>
<dbReference type="MassIVE" id="Q64ET8"/>
<dbReference type="PaxDb" id="9606-ENSP00000424015"/>
<dbReference type="PeptideAtlas" id="Q64ET8"/>
<dbReference type="Antibodypedia" id="53242">
    <property type="antibodies" value="3 antibodies from 3 providers"/>
</dbReference>
<dbReference type="DNASU" id="448831"/>
<dbReference type="Ensembl" id="ENST00000378763.1">
    <molecule id="Q64ET8-1"/>
    <property type="protein sequence ID" value="ENSP00000368039.1"/>
    <property type="gene ID" value="ENSG00000205097.7"/>
</dbReference>
<dbReference type="Ensembl" id="ENST00000504750.6">
    <molecule id="Q64ET8-2"/>
    <property type="protein sequence ID" value="ENSP00000424015.1"/>
    <property type="gene ID" value="ENSG00000205097.7"/>
</dbReference>
<dbReference type="Ensembl" id="ENST00000611713.1">
    <molecule id="Q64ET8-1"/>
    <property type="protein sequence ID" value="ENSP00000482196.1"/>
    <property type="gene ID" value="ENSG00000274972.3"/>
</dbReference>
<dbReference type="Ensembl" id="ENST00000629452.2">
    <molecule id="Q64ET8-2"/>
    <property type="protein sequence ID" value="ENSP00000485877.1"/>
    <property type="gene ID" value="ENSG00000274972.3"/>
</dbReference>
<dbReference type="Ensembl" id="ENST00000644173.1">
    <molecule id="Q64ET8-1"/>
    <property type="protein sequence ID" value="ENSP00000496323.1"/>
    <property type="gene ID" value="ENSG00000285063.1"/>
</dbReference>
<dbReference type="Ensembl" id="ENST00000645766.1">
    <molecule id="Q64ET8-1"/>
    <property type="protein sequence ID" value="ENSP00000495315.1"/>
    <property type="gene ID" value="ENSG00000285063.1"/>
</dbReference>
<dbReference type="Ensembl" id="ENST00000646140.1">
    <molecule id="Q64ET8-1"/>
    <property type="protein sequence ID" value="ENSP00000494024.1"/>
    <property type="gene ID" value="ENSG00000285202.1"/>
</dbReference>
<dbReference type="Ensembl" id="ENST00000646368.2">
    <molecule id="Q64ET8-2"/>
    <property type="protein sequence ID" value="ENSP00000494204.2"/>
    <property type="gene ID" value="ENSG00000285202.1"/>
</dbReference>
<dbReference type="GeneID" id="448831"/>
<dbReference type="KEGG" id="hsa:448831"/>
<dbReference type="MANE-Select" id="ENST00000504750.6">
    <molecule id="Q64ET8-2"/>
    <property type="protein sequence ID" value="ENSP00000424015.1"/>
    <property type="RefSeq nucleotide sequence ID" value="NM_001286820.2"/>
    <property type="RefSeq protein sequence ID" value="NP_001273749.1"/>
</dbReference>
<dbReference type="UCSC" id="uc003izv.4">
    <molecule id="Q64ET8-1"/>
    <property type="organism name" value="human"/>
</dbReference>
<dbReference type="AGR" id="HGNC:19136"/>
<dbReference type="CTD" id="448831"/>
<dbReference type="DisGeNET" id="448831"/>
<dbReference type="GeneCards" id="FRG2"/>
<dbReference type="HGNC" id="HGNC:19136">
    <property type="gene designation" value="FRG2"/>
</dbReference>
<dbReference type="HPA" id="ENSG00000205097">
    <property type="expression patterns" value="Not detected"/>
</dbReference>
<dbReference type="MIM" id="609032">
    <property type="type" value="gene"/>
</dbReference>
<dbReference type="neXtProt" id="NX_Q64ET8"/>
<dbReference type="OpenTargets" id="ENSG00000205097"/>
<dbReference type="PharmGKB" id="PA162388919"/>
<dbReference type="VEuPathDB" id="HostDB:ENSG00000205097"/>
<dbReference type="eggNOG" id="ENOG502SNAQ">
    <property type="taxonomic scope" value="Eukaryota"/>
</dbReference>
<dbReference type="GeneTree" id="ENSGT00530000064266"/>
<dbReference type="HOGENOM" id="CLU_087494_0_0_1"/>
<dbReference type="InParanoid" id="Q64ET8"/>
<dbReference type="OMA" id="QVESEPN"/>
<dbReference type="OrthoDB" id="9751302at2759"/>
<dbReference type="PAN-GO" id="Q64ET8">
    <property type="GO annotations" value="0 GO annotations based on evolutionary models"/>
</dbReference>
<dbReference type="PhylomeDB" id="Q64ET8"/>
<dbReference type="TreeFam" id="TF342559"/>
<dbReference type="PathwayCommons" id="Q64ET8"/>
<dbReference type="SignaLink" id="Q64ET8"/>
<dbReference type="BioGRID-ORCS" id="448831">
    <property type="hits" value="243 hits in 655 CRISPR screens"/>
</dbReference>
<dbReference type="GenomeRNAi" id="448831"/>
<dbReference type="Pharos" id="Q64ET8">
    <property type="development level" value="Tbio"/>
</dbReference>
<dbReference type="PRO" id="PR:Q64ET8"/>
<dbReference type="Proteomes" id="UP000005640">
    <property type="component" value="Chromosome 4"/>
</dbReference>
<dbReference type="RNAct" id="Q64ET8">
    <property type="molecule type" value="protein"/>
</dbReference>
<dbReference type="Bgee" id="ENSG00000205097">
    <property type="expression patterns" value="Expressed in stromal cell of endometrium and 4 other cell types or tissues"/>
</dbReference>
<dbReference type="GO" id="GO:0005634">
    <property type="term" value="C:nucleus"/>
    <property type="evidence" value="ECO:0007669"/>
    <property type="project" value="UniProtKB-SubCell"/>
</dbReference>
<dbReference type="InterPro" id="IPR026245">
    <property type="entry name" value="FRG2"/>
</dbReference>
<dbReference type="PANTHER" id="PTHR31883">
    <property type="entry name" value="PROTEIN FRG2-RELATED"/>
    <property type="match status" value="1"/>
</dbReference>
<dbReference type="PANTHER" id="PTHR31883:SF7">
    <property type="entry name" value="PROTEIN FRG2-RELATED"/>
    <property type="match status" value="1"/>
</dbReference>
<dbReference type="Pfam" id="PF15315">
    <property type="entry name" value="FRG2"/>
    <property type="match status" value="1"/>
</dbReference>
<dbReference type="PRINTS" id="PR02074">
    <property type="entry name" value="PROTEINFRG2"/>
</dbReference>
<reference key="1">
    <citation type="journal article" date="2004" name="J. Med. Genet.">
        <title>FRG2, an FSHD candidate gene, is transcriptionally upregulated in differentiating primary myoblast cultures of FSHD patients.</title>
        <authorList>
            <person name="Rijkers T."/>
            <person name="Deidda G."/>
            <person name="van Koningsbruggen S."/>
            <person name="van Geel M."/>
            <person name="Lemmers R.J.L.F."/>
            <person name="van Deutekom J.C.T."/>
            <person name="Figlewicz D."/>
            <person name="Hewitt J.E."/>
            <person name="Padberg G.W."/>
            <person name="Frants R.R."/>
            <person name="van der Maarel S.M."/>
        </authorList>
    </citation>
    <scope>NUCLEOTIDE SEQUENCE [MRNA] (ISOFORM 1)</scope>
    <scope>SUBCELLULAR LOCATION</scope>
    <scope>TISSUE SPECIFICITY</scope>
</reference>
<reference key="2">
    <citation type="journal article" date="2005" name="Nature">
        <title>Generation and annotation of the DNA sequences of human chromosomes 2 and 4.</title>
        <authorList>
            <person name="Hillier L.W."/>
            <person name="Graves T.A."/>
            <person name="Fulton R.S."/>
            <person name="Fulton L.A."/>
            <person name="Pepin K.H."/>
            <person name="Minx P."/>
            <person name="Wagner-McPherson C."/>
            <person name="Layman D."/>
            <person name="Wylie K."/>
            <person name="Sekhon M."/>
            <person name="Becker M.C."/>
            <person name="Fewell G.A."/>
            <person name="Delehaunty K.D."/>
            <person name="Miner T.L."/>
            <person name="Nash W.E."/>
            <person name="Kremitzki C."/>
            <person name="Oddy L."/>
            <person name="Du H."/>
            <person name="Sun H."/>
            <person name="Bradshaw-Cordum H."/>
            <person name="Ali J."/>
            <person name="Carter J."/>
            <person name="Cordes M."/>
            <person name="Harris A."/>
            <person name="Isak A."/>
            <person name="van Brunt A."/>
            <person name="Nguyen C."/>
            <person name="Du F."/>
            <person name="Courtney L."/>
            <person name="Kalicki J."/>
            <person name="Ozersky P."/>
            <person name="Abbott S."/>
            <person name="Armstrong J."/>
            <person name="Belter E.A."/>
            <person name="Caruso L."/>
            <person name="Cedroni M."/>
            <person name="Cotton M."/>
            <person name="Davidson T."/>
            <person name="Desai A."/>
            <person name="Elliott G."/>
            <person name="Erb T."/>
            <person name="Fronick C."/>
            <person name="Gaige T."/>
            <person name="Haakenson W."/>
            <person name="Haglund K."/>
            <person name="Holmes A."/>
            <person name="Harkins R."/>
            <person name="Kim K."/>
            <person name="Kruchowski S.S."/>
            <person name="Strong C.M."/>
            <person name="Grewal N."/>
            <person name="Goyea E."/>
            <person name="Hou S."/>
            <person name="Levy A."/>
            <person name="Martinka S."/>
            <person name="Mead K."/>
            <person name="McLellan M.D."/>
            <person name="Meyer R."/>
            <person name="Randall-Maher J."/>
            <person name="Tomlinson C."/>
            <person name="Dauphin-Kohlberg S."/>
            <person name="Kozlowicz-Reilly A."/>
            <person name="Shah N."/>
            <person name="Swearengen-Shahid S."/>
            <person name="Snider J."/>
            <person name="Strong J.T."/>
            <person name="Thompson J."/>
            <person name="Yoakum M."/>
            <person name="Leonard S."/>
            <person name="Pearman C."/>
            <person name="Trani L."/>
            <person name="Radionenko M."/>
            <person name="Waligorski J.E."/>
            <person name="Wang C."/>
            <person name="Rock S.M."/>
            <person name="Tin-Wollam A.-M."/>
            <person name="Maupin R."/>
            <person name="Latreille P."/>
            <person name="Wendl M.C."/>
            <person name="Yang S.-P."/>
            <person name="Pohl C."/>
            <person name="Wallis J.W."/>
            <person name="Spieth J."/>
            <person name="Bieri T.A."/>
            <person name="Berkowicz N."/>
            <person name="Nelson J.O."/>
            <person name="Osborne J."/>
            <person name="Ding L."/>
            <person name="Meyer R."/>
            <person name="Sabo A."/>
            <person name="Shotland Y."/>
            <person name="Sinha P."/>
            <person name="Wohldmann P.E."/>
            <person name="Cook L.L."/>
            <person name="Hickenbotham M.T."/>
            <person name="Eldred J."/>
            <person name="Williams D."/>
            <person name="Jones T.A."/>
            <person name="She X."/>
            <person name="Ciccarelli F.D."/>
            <person name="Izaurralde E."/>
            <person name="Taylor J."/>
            <person name="Schmutz J."/>
            <person name="Myers R.M."/>
            <person name="Cox D.R."/>
            <person name="Huang X."/>
            <person name="McPherson J.D."/>
            <person name="Mardis E.R."/>
            <person name="Clifton S.W."/>
            <person name="Warren W.C."/>
            <person name="Chinwalla A.T."/>
            <person name="Eddy S.R."/>
            <person name="Marra M.A."/>
            <person name="Ovcharenko I."/>
            <person name="Furey T.S."/>
            <person name="Miller W."/>
            <person name="Eichler E.E."/>
            <person name="Bork P."/>
            <person name="Suyama M."/>
            <person name="Torrents D."/>
            <person name="Waterston R.H."/>
            <person name="Wilson R.K."/>
        </authorList>
    </citation>
    <scope>NUCLEOTIDE SEQUENCE [LARGE SCALE GENOMIC DNA]</scope>
</reference>
<reference key="3">
    <citation type="journal article" date="2004" name="Genome Res.">
        <title>The status, quality, and expansion of the NIH full-length cDNA project: the Mammalian Gene Collection (MGC).</title>
        <authorList>
            <consortium name="The MGC Project Team"/>
        </authorList>
    </citation>
    <scope>NUCLEOTIDE SEQUENCE [LARGE SCALE MRNA] (ISOFORM 2)</scope>
</reference>
<comment type="subcellular location">
    <subcellularLocation>
        <location evidence="2">Nucleus</location>
    </subcellularLocation>
</comment>
<comment type="alternative products">
    <event type="alternative splicing"/>
    <isoform>
        <id>Q64ET8-1</id>
        <name>1</name>
        <sequence type="displayed"/>
    </isoform>
    <isoform>
        <id>Q64ET8-2</id>
        <name>2</name>
        <sequence type="described" ref="VSP_055076"/>
    </isoform>
</comment>
<comment type="tissue specificity">
    <text evidence="2">Expression is undetectable in all tissues tested except for differentiating myoblasts of FSHD patients, which display low, yet distinct levels of expression, partly from FRG2, but predominantly originating from its homolog on chromosome 10.</text>
</comment>
<comment type="similarity">
    <text evidence="4">Belongs to the FRG2 family.</text>
</comment>
<protein>
    <recommendedName>
        <fullName>Protein FRG2</fullName>
    </recommendedName>
    <alternativeName>
        <fullName>FSHD region gene 2 protein</fullName>
    </alternativeName>
</protein>